<proteinExistence type="inferred from homology"/>
<feature type="chain" id="PRO_0000279771" description="Probable potassium transport system protein Kup">
    <location>
        <begin position="1"/>
        <end position="637"/>
    </location>
</feature>
<feature type="transmembrane region" description="Helical" evidence="1">
    <location>
        <begin position="24"/>
        <end position="44"/>
    </location>
</feature>
<feature type="transmembrane region" description="Helical" evidence="1">
    <location>
        <begin position="64"/>
        <end position="84"/>
    </location>
</feature>
<feature type="transmembrane region" description="Helical" evidence="1">
    <location>
        <begin position="113"/>
        <end position="133"/>
    </location>
</feature>
<feature type="transmembrane region" description="Helical" evidence="1">
    <location>
        <begin position="151"/>
        <end position="171"/>
    </location>
</feature>
<feature type="transmembrane region" description="Helical" evidence="1">
    <location>
        <begin position="182"/>
        <end position="202"/>
    </location>
</feature>
<feature type="transmembrane region" description="Helical" evidence="1">
    <location>
        <begin position="225"/>
        <end position="245"/>
    </location>
</feature>
<feature type="transmembrane region" description="Helical" evidence="1">
    <location>
        <begin position="261"/>
        <end position="281"/>
    </location>
</feature>
<feature type="transmembrane region" description="Helical" evidence="1">
    <location>
        <begin position="290"/>
        <end position="310"/>
    </location>
</feature>
<feature type="transmembrane region" description="Helical" evidence="1">
    <location>
        <begin position="351"/>
        <end position="371"/>
    </location>
</feature>
<feature type="transmembrane region" description="Helical" evidence="1">
    <location>
        <begin position="381"/>
        <end position="401"/>
    </location>
</feature>
<feature type="transmembrane region" description="Helical" evidence="1">
    <location>
        <begin position="409"/>
        <end position="429"/>
    </location>
</feature>
<feature type="transmembrane region" description="Helical" evidence="1">
    <location>
        <begin position="433"/>
        <end position="453"/>
    </location>
</feature>
<evidence type="ECO:0000255" key="1">
    <source>
        <dbReference type="HAMAP-Rule" id="MF_01522"/>
    </source>
</evidence>
<reference key="1">
    <citation type="submission" date="2006-08" db="EMBL/GenBank/DDBJ databases">
        <title>Complete sequence of chromosome 1 of Burkholderia cepacia AMMD.</title>
        <authorList>
            <person name="Copeland A."/>
            <person name="Lucas S."/>
            <person name="Lapidus A."/>
            <person name="Barry K."/>
            <person name="Detter J.C."/>
            <person name="Glavina del Rio T."/>
            <person name="Hammon N."/>
            <person name="Israni S."/>
            <person name="Pitluck S."/>
            <person name="Bruce D."/>
            <person name="Chain P."/>
            <person name="Malfatti S."/>
            <person name="Shin M."/>
            <person name="Vergez L."/>
            <person name="Schmutz J."/>
            <person name="Larimer F."/>
            <person name="Land M."/>
            <person name="Hauser L."/>
            <person name="Kyrpides N."/>
            <person name="Kim E."/>
            <person name="Parke J."/>
            <person name="Coenye T."/>
            <person name="Konstantinidis K."/>
            <person name="Ramette A."/>
            <person name="Tiedje J."/>
            <person name="Richardson P."/>
        </authorList>
    </citation>
    <scope>NUCLEOTIDE SEQUENCE [LARGE SCALE GENOMIC DNA]</scope>
    <source>
        <strain>ATCC BAA-244 / DSM 16087 / CCUG 44356 / LMG 19182 / AMMD</strain>
    </source>
</reference>
<organism>
    <name type="scientific">Burkholderia ambifaria (strain ATCC BAA-244 / DSM 16087 / CCUG 44356 / LMG 19182 / AMMD)</name>
    <name type="common">Burkholderia cepacia (strain AMMD)</name>
    <dbReference type="NCBI Taxonomy" id="339670"/>
    <lineage>
        <taxon>Bacteria</taxon>
        <taxon>Pseudomonadati</taxon>
        <taxon>Pseudomonadota</taxon>
        <taxon>Betaproteobacteria</taxon>
        <taxon>Burkholderiales</taxon>
        <taxon>Burkholderiaceae</taxon>
        <taxon>Burkholderia</taxon>
        <taxon>Burkholderia cepacia complex</taxon>
    </lineage>
</organism>
<name>KUP_BURCM</name>
<keyword id="KW-0997">Cell inner membrane</keyword>
<keyword id="KW-1003">Cell membrane</keyword>
<keyword id="KW-0406">Ion transport</keyword>
<keyword id="KW-0472">Membrane</keyword>
<keyword id="KW-0630">Potassium</keyword>
<keyword id="KW-0633">Potassium transport</keyword>
<keyword id="KW-0769">Symport</keyword>
<keyword id="KW-0812">Transmembrane</keyword>
<keyword id="KW-1133">Transmembrane helix</keyword>
<keyword id="KW-0813">Transport</keyword>
<comment type="function">
    <text evidence="1">Transport of potassium into the cell. Likely operates as a K(+):H(+) symporter.</text>
</comment>
<comment type="catalytic activity">
    <reaction evidence="1">
        <text>K(+)(in) + H(+)(in) = K(+)(out) + H(+)(out)</text>
        <dbReference type="Rhea" id="RHEA:28490"/>
        <dbReference type="ChEBI" id="CHEBI:15378"/>
        <dbReference type="ChEBI" id="CHEBI:29103"/>
    </reaction>
    <physiologicalReaction direction="right-to-left" evidence="1">
        <dbReference type="Rhea" id="RHEA:28492"/>
    </physiologicalReaction>
</comment>
<comment type="subcellular location">
    <subcellularLocation>
        <location evidence="1">Cell inner membrane</location>
        <topology evidence="1">Multi-pass membrane protein</topology>
    </subcellularLocation>
</comment>
<comment type="similarity">
    <text evidence="1">Belongs to the HAK/KUP transporter (TC 2.A.72) family.</text>
</comment>
<protein>
    <recommendedName>
        <fullName evidence="1">Probable potassium transport system protein Kup</fullName>
    </recommendedName>
</protein>
<gene>
    <name evidence="1" type="primary">kup</name>
    <name type="ordered locus">Bamb_1737</name>
</gene>
<sequence length="637" mass="69069">MNDTIQATDAAHAHSTHQHSMRALAIAAIGVVFGDIGTSPLYALKEAFSPAHGIPLTESSILGVISLLFWAIILVVGIKYLLFVMRADNNGEGGVLALMALSLRPLDPKTRVAGALMALGIFGACMFYGDAVITPAISVMSAVEGLEIATPHLSHLVLPITIVILIALFWIQRHGTALVGKLFGPIMVVWFIVIAALGVYHIARVPGIIAAINPYYAASFMADHLLQAYVVLGSVVLVLTGAEALYADMGHFGAKPIRLAAYGLVMPSLVLNYFGQGALLIQNPKAIENPFFLLAPEWGLLPLVVLSTVATVIASQAVISGAYSLTSQAIQLGYVPRMKVLHTSELAIGQIYVPVVNWLLLFVILCIVIGFKSSDNLAAAYGIAVTATMVITTVLACVVMVKVWNWNRLLVGAIIAVFLAIDLGFFGANLLKVAQGGWLPLGIGALLFFLLMTWYKGRHIVKERTAADGIPLEPFLQGLLAHPPHRVSGTAIYLTGNDKLVPVSLLHNLKHNKVLHERTIFLTFVTRDIPYVRDDTRLSSRDAGGGLYIVKAQYGFNETPDVKAVLEEFGRSHDMTFELMDTSFFLARETVVPTHLPGMSIWRERVFAWMHQNAAKPTDFFSIPANRVVELGTKIEI</sequence>
<dbReference type="EMBL" id="CP000440">
    <property type="protein sequence ID" value="ABI87293.1"/>
    <property type="molecule type" value="Genomic_DNA"/>
</dbReference>
<dbReference type="RefSeq" id="WP_011657015.1">
    <property type="nucleotide sequence ID" value="NC_008390.1"/>
</dbReference>
<dbReference type="GeneID" id="93086056"/>
<dbReference type="KEGG" id="bam:Bamb_1737"/>
<dbReference type="PATRIC" id="fig|339670.21.peg.3224"/>
<dbReference type="eggNOG" id="COG3158">
    <property type="taxonomic scope" value="Bacteria"/>
</dbReference>
<dbReference type="Proteomes" id="UP000000662">
    <property type="component" value="Chromosome 1"/>
</dbReference>
<dbReference type="GO" id="GO:0005886">
    <property type="term" value="C:plasma membrane"/>
    <property type="evidence" value="ECO:0007669"/>
    <property type="project" value="UniProtKB-SubCell"/>
</dbReference>
<dbReference type="GO" id="GO:0015079">
    <property type="term" value="F:potassium ion transmembrane transporter activity"/>
    <property type="evidence" value="ECO:0007669"/>
    <property type="project" value="UniProtKB-UniRule"/>
</dbReference>
<dbReference type="GO" id="GO:0015293">
    <property type="term" value="F:symporter activity"/>
    <property type="evidence" value="ECO:0007669"/>
    <property type="project" value="UniProtKB-UniRule"/>
</dbReference>
<dbReference type="HAMAP" id="MF_01522">
    <property type="entry name" value="Kup"/>
    <property type="match status" value="1"/>
</dbReference>
<dbReference type="InterPro" id="IPR003855">
    <property type="entry name" value="K+_transporter"/>
</dbReference>
<dbReference type="InterPro" id="IPR053952">
    <property type="entry name" value="K_trans_C"/>
</dbReference>
<dbReference type="InterPro" id="IPR053951">
    <property type="entry name" value="K_trans_N"/>
</dbReference>
<dbReference type="InterPro" id="IPR023051">
    <property type="entry name" value="Kup"/>
</dbReference>
<dbReference type="PANTHER" id="PTHR30540:SF79">
    <property type="entry name" value="LOW AFFINITY POTASSIUM TRANSPORT SYSTEM PROTEIN KUP"/>
    <property type="match status" value="1"/>
</dbReference>
<dbReference type="PANTHER" id="PTHR30540">
    <property type="entry name" value="OSMOTIC STRESS POTASSIUM TRANSPORTER"/>
    <property type="match status" value="1"/>
</dbReference>
<dbReference type="Pfam" id="PF02705">
    <property type="entry name" value="K_trans"/>
    <property type="match status" value="1"/>
</dbReference>
<dbReference type="Pfam" id="PF22776">
    <property type="entry name" value="K_trans_C"/>
    <property type="match status" value="1"/>
</dbReference>
<accession>Q0BEY0</accession>